<name>RS2_LEIAM</name>
<keyword id="KW-0687">Ribonucleoprotein</keyword>
<keyword id="KW-0689">Ribosomal protein</keyword>
<dbReference type="EMBL" id="AF038379">
    <property type="protein sequence ID" value="AAB94922.1"/>
    <property type="molecule type" value="Genomic_DNA"/>
</dbReference>
<dbReference type="SMR" id="O43992"/>
<dbReference type="VEuPathDB" id="TriTrypDB:LAMA_000290100"/>
<dbReference type="VEuPathDB" id="TriTrypDB:LAMAPH8_000295800"/>
<dbReference type="GO" id="GO:0022627">
    <property type="term" value="C:cytosolic small ribosomal subunit"/>
    <property type="evidence" value="ECO:0007669"/>
    <property type="project" value="TreeGrafter"/>
</dbReference>
<dbReference type="GO" id="GO:0003723">
    <property type="term" value="F:RNA binding"/>
    <property type="evidence" value="ECO:0007669"/>
    <property type="project" value="InterPro"/>
</dbReference>
<dbReference type="GO" id="GO:0003735">
    <property type="term" value="F:structural constituent of ribosome"/>
    <property type="evidence" value="ECO:0007669"/>
    <property type="project" value="InterPro"/>
</dbReference>
<dbReference type="GO" id="GO:0006412">
    <property type="term" value="P:translation"/>
    <property type="evidence" value="ECO:0007669"/>
    <property type="project" value="InterPro"/>
</dbReference>
<dbReference type="FunFam" id="3.30.160.20:FF:000067">
    <property type="entry name" value="40S ribosomal protein S2"/>
    <property type="match status" value="1"/>
</dbReference>
<dbReference type="FunFam" id="3.30.230.10:FF:000004">
    <property type="entry name" value="40S ribosomal protein S2"/>
    <property type="match status" value="1"/>
</dbReference>
<dbReference type="Gene3D" id="3.30.160.20">
    <property type="match status" value="1"/>
</dbReference>
<dbReference type="Gene3D" id="3.30.230.10">
    <property type="match status" value="1"/>
</dbReference>
<dbReference type="InterPro" id="IPR020568">
    <property type="entry name" value="Ribosomal_Su5_D2-typ_SF"/>
</dbReference>
<dbReference type="InterPro" id="IPR000851">
    <property type="entry name" value="Ribosomal_uS5"/>
</dbReference>
<dbReference type="InterPro" id="IPR005324">
    <property type="entry name" value="Ribosomal_uS5_C"/>
</dbReference>
<dbReference type="InterPro" id="IPR005711">
    <property type="entry name" value="Ribosomal_uS5_euk/arc"/>
</dbReference>
<dbReference type="InterPro" id="IPR013810">
    <property type="entry name" value="Ribosomal_uS5_N"/>
</dbReference>
<dbReference type="InterPro" id="IPR018192">
    <property type="entry name" value="Ribosomal_uS5_N_CS"/>
</dbReference>
<dbReference type="InterPro" id="IPR014721">
    <property type="entry name" value="Ribsml_uS5_D2-typ_fold_subgr"/>
</dbReference>
<dbReference type="NCBIfam" id="TIGR01020">
    <property type="entry name" value="uS5_euk_arch"/>
    <property type="match status" value="1"/>
</dbReference>
<dbReference type="PANTHER" id="PTHR13718:SF4">
    <property type="entry name" value="40S RIBOSOMAL PROTEIN S2"/>
    <property type="match status" value="1"/>
</dbReference>
<dbReference type="PANTHER" id="PTHR13718">
    <property type="entry name" value="RIBOSOMAL S SUBUNIT"/>
    <property type="match status" value="1"/>
</dbReference>
<dbReference type="Pfam" id="PF00333">
    <property type="entry name" value="Ribosomal_S5"/>
    <property type="match status" value="1"/>
</dbReference>
<dbReference type="Pfam" id="PF03719">
    <property type="entry name" value="Ribosomal_S5_C"/>
    <property type="match status" value="1"/>
</dbReference>
<dbReference type="SUPFAM" id="SSF54768">
    <property type="entry name" value="dsRNA-binding domain-like"/>
    <property type="match status" value="1"/>
</dbReference>
<dbReference type="SUPFAM" id="SSF54211">
    <property type="entry name" value="Ribosomal protein S5 domain 2-like"/>
    <property type="match status" value="1"/>
</dbReference>
<dbReference type="PROSITE" id="PS00585">
    <property type="entry name" value="RIBOSOMAL_S5"/>
    <property type="match status" value="1"/>
</dbReference>
<dbReference type="PROSITE" id="PS50881">
    <property type="entry name" value="S5_DSRBD"/>
    <property type="match status" value="1"/>
</dbReference>
<reference key="1">
    <citation type="submission" date="1997-12" db="EMBL/GenBank/DDBJ databases">
        <authorList>
            <person name="Stewart J.C."/>
            <person name="Heard P.L."/>
            <person name="Chaudhuri G."/>
        </authorList>
    </citation>
    <scope>NUCLEOTIDE SEQUENCE [GENOMIC DNA]</scope>
    <source>
        <strain>MHOM/BR/73/LV78</strain>
    </source>
</reference>
<comment type="function">
    <text evidence="1">Component of the ribosome, a large ribonucleoprotein complex responsible for the synthesis of proteins in the cell. The small ribosomal subunit (SSU) binds messenger RNAs (mRNAs) and translates the encoded message by selecting cognate aminoacyl-transfer RNA (tRNA) molecules. The large subunit (LSU) contains the ribosomal catalytic site termed the peptidyl transferase center (PTC), which catalyzes the formation of peptide bonds, thereby polymerizing the amino acids delivered by tRNAs into a polypeptide chain. The nascent polypeptides leave the ribosome through a tunnel in the LSU and interact with protein factors that function in enzymatic processing, targeting, and the membrane insertion of nascent chains at the exit of the ribosomal tunnel. Plays a role in the assembly and function of the 40S ribosomal subunit. Mutations in this protein affects the control of translational fidelity. Involved in nucleolar processing of pre-18S ribosomal RNA and ribosome assembly.</text>
</comment>
<comment type="similarity">
    <text evidence="4">Belongs to the universal ribosomal protein uS5 family.</text>
</comment>
<evidence type="ECO:0000250" key="1">
    <source>
        <dbReference type="UniProtKB" id="P25443"/>
    </source>
</evidence>
<evidence type="ECO:0000255" key="2">
    <source>
        <dbReference type="PROSITE-ProRule" id="PRU00268"/>
    </source>
</evidence>
<evidence type="ECO:0000256" key="3">
    <source>
        <dbReference type="SAM" id="MobiDB-lite"/>
    </source>
</evidence>
<evidence type="ECO:0000305" key="4"/>
<sequence length="265" mass="28703">MADTQPAQEAPAADAPRAERNFGRGRGGRGGRGRGRGGPGEEKEWVPCTKLGRLVKAQKVTSLEEIFLFSMPIKEHQIVDTLIAEGKLHDEMMKIYPVQKATSAGQRTRFKAFNVVGDCDGHIGIGARVGKEVSLAIRASMIAAKLNIVPVRRGYWGNKIGEPHTIPMKVTGKCGSVAVRLVPAPRGTGIVAAPVPKKILEFAGVEDVYTSSRGKTRTHGNLIMATFYALRKTYGFLTPDLWADTEPSRDPTDEHGELLAEMTTA</sequence>
<protein>
    <recommendedName>
        <fullName evidence="4">Small ribosomal subunit protein uS5</fullName>
    </recommendedName>
    <alternativeName>
        <fullName>40S ribosomal protein S2</fullName>
    </alternativeName>
</protein>
<accession>O43992</accession>
<organism>
    <name type="scientific">Leishmania amazonensis</name>
    <dbReference type="NCBI Taxonomy" id="5659"/>
    <lineage>
        <taxon>Eukaryota</taxon>
        <taxon>Discoba</taxon>
        <taxon>Euglenozoa</taxon>
        <taxon>Kinetoplastea</taxon>
        <taxon>Metakinetoplastina</taxon>
        <taxon>Trypanosomatida</taxon>
        <taxon>Trypanosomatidae</taxon>
        <taxon>Leishmaniinae</taxon>
        <taxon>Leishmania</taxon>
    </lineage>
</organism>
<proteinExistence type="inferred from homology"/>
<feature type="chain" id="PRO_0000131680" description="Small ribosomal subunit protein uS5">
    <location>
        <begin position="1"/>
        <end position="265"/>
    </location>
</feature>
<feature type="domain" description="S5 DRBM" evidence="2">
    <location>
        <begin position="88"/>
        <end position="151"/>
    </location>
</feature>
<feature type="region of interest" description="Disordered" evidence="3">
    <location>
        <begin position="1"/>
        <end position="44"/>
    </location>
</feature>
<feature type="region of interest" description="Disordered" evidence="3">
    <location>
        <begin position="245"/>
        <end position="265"/>
    </location>
</feature>
<feature type="compositionally biased region" description="Low complexity" evidence="3">
    <location>
        <begin position="1"/>
        <end position="15"/>
    </location>
</feature>
<feature type="compositionally biased region" description="Basic residues" evidence="3">
    <location>
        <begin position="26"/>
        <end position="35"/>
    </location>
</feature>
<feature type="compositionally biased region" description="Basic and acidic residues" evidence="3">
    <location>
        <begin position="246"/>
        <end position="258"/>
    </location>
</feature>